<keyword id="KW-0002">3D-structure</keyword>
<keyword id="KW-1035">Host cytoplasm</keyword>
<keyword id="KW-1048">Host nucleus</keyword>
<keyword id="KW-0945">Host-virus interaction</keyword>
<keyword id="KW-0378">Hydrolase</keyword>
<keyword id="KW-1127">Modulation of host ubiquitin pathway by viral deubiquitinase</keyword>
<keyword id="KW-1130">Modulation of host ubiquitin pathway by virus</keyword>
<keyword id="KW-0645">Protease</keyword>
<keyword id="KW-1185">Reference proteome</keyword>
<keyword id="KW-0677">Repeat</keyword>
<keyword id="KW-0788">Thiol protease</keyword>
<keyword id="KW-0833">Ubl conjugation pathway</keyword>
<keyword id="KW-0946">Virion</keyword>
<keyword id="KW-0920">Virion tegument</keyword>
<comment type="function">
    <text evidence="1 4 5 6 7 11 12">Large tegument protein that plays multiple roles in the viral cycle. During viral entry, remains associated with the capsid while most of the tegument is detached and participates in the capsid transport toward the host nucleus. Plays a role in the routing of the capsid at the nuclear pore complex and subsequent uncoating. Within the host nucleus, acts as a deneddylase and promotes the degradation of nuclear CRLs (cullin-RING ubiquitin ligases) and thereby stabilizes nuclear CRL substrates, while cytoplasmic CRLs remain unaffected. These modifications prevent host cell cycle S-phase progression and create a favorable environment allowing efficient viral genome replication. Participates later in the secondary envelopment of capsids. Indeed, plays a linker role for the association of the outer viral tegument to the capsids together with the inner tegument protein (By similarity). Counteracts host TLR-mediated NF-kappa-B activation through both MYD88 and TICAM1-dependent pathways by interfering with 'Lys-63'- and 'Lys-48'-linked ubiquitination of signaling intermediates such as TRAF6 and IKBKG (PubMed:24586164). Inhibits type I interferon production by forming a tri-molecular complex with host TRIM25 and 14-3-3 thereby promoting TRIM25 autoubiquitination and sequestration of the ligase into inactive protein aggregates (PubMed:31710640). In turn, host RIGI is recruited to the complex but ubiquitination is severely impaired leading to inhibition of the pathway (PubMed:29357390). Also catalyzes the removal of 'Lys-48'- and 'Lys-63'-linked ubiquitin chains on host TBK1 and STING1 suppressing cGAS-STING signaling in addition to the RIGI-MAVS pathway (PubMed:36802409). Inhibits selective autophagy by deubiquitinating host SQSTM1. In turn, decreased SQSTM1 ubiquitination fails to recruit LC3 to SQSTM1-positive aggregates (PubMed:34543352). In the host nucleus, deubiquitinates topoisomerase II subunits TOP2A and TOP2B thereby stabilizing SUMOylated TOP2 which halts the DNA damage response to TOP2-induced double strand DNA breaks and promotes cell survival (PubMed:34543352).</text>
</comment>
<comment type="catalytic activity">
    <reaction evidence="1 5 7 10">
        <text>Thiol-dependent hydrolysis of ester, thioester, amide, peptide and isopeptide bonds formed by the C-terminal Gly of ubiquitin (a 76-residue protein attached to proteins as an intracellular targeting signal).</text>
        <dbReference type="EC" id="3.4.19.12"/>
    </reaction>
</comment>
<comment type="subunit">
    <text evidence="1 6 8 9">Interacts with host CUL1 and CUL4A; these interactions inhibit the E3 ligase activity of cullins (PubMed:22474075). Interacts with inner tegument protein. Interacts with capsid vertex specific component CVC2. Interacts with the major capsid protein/MCP (By similarity). Interacts with host TRIM25 and YWHAZ (PubMed:29357390, PubMed:31710640).</text>
</comment>
<comment type="subcellular location">
    <subcellularLocation>
        <location evidence="1 3">Virion tegument</location>
    </subcellularLocation>
    <subcellularLocation>
        <location evidence="1 3 7 8 9 11">Host cytoplasm</location>
    </subcellularLocation>
    <subcellularLocation>
        <location evidence="1 11">Host nucleus</location>
    </subcellularLocation>
    <text evidence="1">Tightly associated with the capsid.</text>
</comment>
<comment type="similarity">
    <text evidence="1">Belongs to the herpesviridae large tegument protein family.</text>
</comment>
<dbReference type="EC" id="3.4.19.12" evidence="1 5 7 10 11"/>
<dbReference type="EC" id="3.4.22.-" evidence="1 5"/>
<dbReference type="EMBL" id="V01555">
    <property type="protein sequence ID" value="CAA24839.1"/>
    <property type="molecule type" value="Genomic_DNA"/>
</dbReference>
<dbReference type="EMBL" id="AJ507799">
    <property type="protein sequence ID" value="CAD53402.1"/>
    <property type="molecule type" value="Genomic_DNA"/>
</dbReference>
<dbReference type="PIR" id="G93065">
    <property type="entry name" value="QQBE8"/>
</dbReference>
<dbReference type="RefSeq" id="YP_401652.1">
    <property type="nucleotide sequence ID" value="NC_007605.1"/>
</dbReference>
<dbReference type="PDB" id="6W2D">
    <property type="method" value="EM"/>
    <property type="resolution" value="4.00 A"/>
    <property type="chains" value="y/z=1-3149"/>
</dbReference>
<dbReference type="PDB" id="6W2E">
    <property type="method" value="EM"/>
    <property type="resolution" value="4.40 A"/>
    <property type="chains" value="y/z=1-3149"/>
</dbReference>
<dbReference type="PDB" id="7BQX">
    <property type="method" value="EM"/>
    <property type="resolution" value="4.20 A"/>
    <property type="chains" value="B/O=1-3149"/>
</dbReference>
<dbReference type="PDB" id="7BR7">
    <property type="method" value="EM"/>
    <property type="resolution" value="4.30 A"/>
    <property type="chains" value="B/O=1-3149"/>
</dbReference>
<dbReference type="PDBsum" id="6W2D"/>
<dbReference type="PDBsum" id="6W2E"/>
<dbReference type="PDBsum" id="7BQX"/>
<dbReference type="PDBsum" id="7BR7"/>
<dbReference type="EMDB" id="EMD-21525"/>
<dbReference type="EMDB" id="EMD-21526"/>
<dbReference type="EMDB" id="EMD-30157"/>
<dbReference type="EMDB" id="EMD-30158"/>
<dbReference type="SMR" id="P03186"/>
<dbReference type="BioGRID" id="971768">
    <property type="interactions" value="78"/>
</dbReference>
<dbReference type="IntAct" id="P03186">
    <property type="interactions" value="1"/>
</dbReference>
<dbReference type="MINT" id="P03186"/>
<dbReference type="DNASU" id="3783726"/>
<dbReference type="GeneID" id="3783726"/>
<dbReference type="KEGG" id="vg:3783726"/>
<dbReference type="BRENDA" id="3.4.19.12">
    <property type="organism ID" value="2112"/>
</dbReference>
<dbReference type="SIGNOR" id="P03186"/>
<dbReference type="Proteomes" id="UP000153037">
    <property type="component" value="Segment"/>
</dbReference>
<dbReference type="GO" id="GO:0030430">
    <property type="term" value="C:host cell cytoplasm"/>
    <property type="evidence" value="ECO:0007669"/>
    <property type="project" value="UniProtKB-SubCell"/>
</dbReference>
<dbReference type="GO" id="GO:0042025">
    <property type="term" value="C:host cell nucleus"/>
    <property type="evidence" value="ECO:0007669"/>
    <property type="project" value="UniProtKB-SubCell"/>
</dbReference>
<dbReference type="GO" id="GO:0019033">
    <property type="term" value="C:viral tegument"/>
    <property type="evidence" value="ECO:0007669"/>
    <property type="project" value="UniProtKB-SubCell"/>
</dbReference>
<dbReference type="GO" id="GO:0004843">
    <property type="term" value="F:cysteine-type deubiquitinase activity"/>
    <property type="evidence" value="ECO:0007669"/>
    <property type="project" value="UniProtKB-EC"/>
</dbReference>
<dbReference type="GO" id="GO:0006508">
    <property type="term" value="P:proteolysis"/>
    <property type="evidence" value="ECO:0007669"/>
    <property type="project" value="UniProtKB-KW"/>
</dbReference>
<dbReference type="GO" id="GO:0039648">
    <property type="term" value="P:symbiont-mediated perturbation of host ubiquitin-like protein modification"/>
    <property type="evidence" value="ECO:0007669"/>
    <property type="project" value="UniProtKB-KW"/>
</dbReference>
<dbReference type="GO" id="GO:0039527">
    <property type="term" value="P:symbiont-mediated suppression of host TRAF-mediated signal transduction"/>
    <property type="evidence" value="ECO:0000269"/>
    <property type="project" value="SigSci"/>
</dbReference>
<dbReference type="Gene3D" id="3.90.70.120">
    <property type="match status" value="1"/>
</dbReference>
<dbReference type="HAMAP" id="MF_04044">
    <property type="entry name" value="HSV_LTP"/>
    <property type="match status" value="1"/>
</dbReference>
<dbReference type="InterPro" id="IPR006928">
    <property type="entry name" value="Herpes_teg_USP"/>
</dbReference>
<dbReference type="InterPro" id="IPR034702">
    <property type="entry name" value="HSV_LTP"/>
</dbReference>
<dbReference type="InterPro" id="IPR038765">
    <property type="entry name" value="Papain-like_cys_pep_sf"/>
</dbReference>
<dbReference type="PANTHER" id="PTHR48125:SF12">
    <property type="entry name" value="AT HOOK TRANSCRIPTION FACTOR FAMILY-RELATED"/>
    <property type="match status" value="1"/>
</dbReference>
<dbReference type="PANTHER" id="PTHR48125">
    <property type="entry name" value="LP07818P1"/>
    <property type="match status" value="1"/>
</dbReference>
<dbReference type="Pfam" id="PF04843">
    <property type="entry name" value="Herpes_teg_N"/>
    <property type="match status" value="1"/>
</dbReference>
<dbReference type="SUPFAM" id="SSF54001">
    <property type="entry name" value="Cysteine proteinases"/>
    <property type="match status" value="1"/>
</dbReference>
<dbReference type="PROSITE" id="PS51521">
    <property type="entry name" value="HTUSP"/>
    <property type="match status" value="1"/>
</dbReference>
<evidence type="ECO:0000255" key="1">
    <source>
        <dbReference type="HAMAP-Rule" id="MF_04044"/>
    </source>
</evidence>
<evidence type="ECO:0000256" key="2">
    <source>
        <dbReference type="SAM" id="MobiDB-lite"/>
    </source>
</evidence>
<evidence type="ECO:0000269" key="3">
    <source>
    </source>
</evidence>
<evidence type="ECO:0000269" key="4">
    <source>
    </source>
</evidence>
<evidence type="ECO:0000269" key="5">
    <source>
    </source>
</evidence>
<evidence type="ECO:0000269" key="6">
    <source>
    </source>
</evidence>
<evidence type="ECO:0000269" key="7">
    <source>
    </source>
</evidence>
<evidence type="ECO:0000269" key="8">
    <source>
    </source>
</evidence>
<evidence type="ECO:0000269" key="9">
    <source>
    </source>
</evidence>
<evidence type="ECO:0000269" key="10">
    <source>
    </source>
</evidence>
<evidence type="ECO:0000269" key="11">
    <source>
    </source>
</evidence>
<evidence type="ECO:0000269" key="12">
    <source>
    </source>
</evidence>
<name>LTP_EBVB9</name>
<organism>
    <name type="scientific">Epstein-Barr virus (strain B95-8)</name>
    <name type="common">HHV-4</name>
    <name type="synonym">Human herpesvirus 4</name>
    <dbReference type="NCBI Taxonomy" id="10377"/>
    <lineage>
        <taxon>Viruses</taxon>
        <taxon>Duplodnaviria</taxon>
        <taxon>Heunggongvirae</taxon>
        <taxon>Peploviricota</taxon>
        <taxon>Herviviricetes</taxon>
        <taxon>Herpesvirales</taxon>
        <taxon>Orthoherpesviridae</taxon>
        <taxon>Gammaherpesvirinae</taxon>
        <taxon>Lymphocryptovirus</taxon>
        <taxon>Lymphocryptovirus humangamma4</taxon>
        <taxon>Epstein-Barr virus (strain GD1)</taxon>
    </lineage>
</organism>
<accession>P03186</accession>
<accession>Q777G4</accession>
<organismHost>
    <name type="scientific">Homo sapiens</name>
    <name type="common">Human</name>
    <dbReference type="NCBI Taxonomy" id="9606"/>
</organismHost>
<reference key="1">
    <citation type="journal article" date="1984" name="Nature">
        <title>DNA sequence and expression of the B95-8 Epstein-Barr virus genome.</title>
        <authorList>
            <person name="Baer R."/>
            <person name="Bankier A.T."/>
            <person name="Biggin M.D."/>
            <person name="Deininger P.L."/>
            <person name="Farrell P.J."/>
            <person name="Gibson T.J."/>
            <person name="Hatfull G."/>
            <person name="Hudson G.S."/>
            <person name="Satchwell S.C."/>
            <person name="Seguin C."/>
            <person name="Tuffnell P.S."/>
            <person name="Barrell B.G."/>
        </authorList>
    </citation>
    <scope>NUCLEOTIDE SEQUENCE [LARGE SCALE GENOMIC DNA]</scope>
</reference>
<reference key="2">
    <citation type="journal article" date="2003" name="Virology">
        <title>Updated Epstein-Barr virus (EBV) DNA sequence and analysis of a promoter for the BART (CST, BARF0) RNAs of EBV.</title>
        <authorList>
            <person name="de Jesus O."/>
            <person name="Smith P.R."/>
            <person name="Spender L.C."/>
            <person name="Elgueta Karstegl C."/>
            <person name="Niller H.H."/>
            <person name="Huang D."/>
            <person name="Farrell P.J."/>
        </authorList>
    </citation>
    <scope>GENOME REANNOTATION</scope>
</reference>
<reference key="3">
    <citation type="journal article" date="2004" name="Proc. Natl. Acad. Sci. U.S.A.">
        <title>Proteins of purified Epstein-Barr virus.</title>
        <authorList>
            <person name="Johannsen E."/>
            <person name="Luftig M."/>
            <person name="Chase M.R."/>
            <person name="Weicksel S."/>
            <person name="Cahir-McFarland E."/>
            <person name="Illanes D."/>
            <person name="Sarracino D."/>
            <person name="Kieff E."/>
        </authorList>
    </citation>
    <scope>SUBCELLULAR LOCATION</scope>
</reference>
<reference key="4">
    <citation type="journal article" date="2009" name="J. Virol.">
        <title>The EBV deubiquitinating enzyme, BPLF1, reduces EBV ribonucleotide reductase activity.</title>
        <authorList>
            <person name="Whitehurst C.B."/>
            <person name="Ning S."/>
            <person name="Bentz G.L."/>
            <person name="Dufour F."/>
            <person name="Gershburg E."/>
            <person name="Shackelford J."/>
            <person name="Langelier Y."/>
            <person name="Pagano J.S."/>
        </authorList>
    </citation>
    <scope>FUNCTION</scope>
</reference>
<reference key="5">
    <citation type="journal article" date="2010" name="Nat. Cell Biol.">
        <title>A deneddylase encoded by Epstein-Barr virus promotes viral DNA replication by regulating the activity of cullin-RING ligases.</title>
        <authorList>
            <person name="Gastaldello S."/>
            <person name="Hildebrand S."/>
            <person name="Faridani O."/>
            <person name="Callegari S."/>
            <person name="Palmkvist M."/>
            <person name="Di Guglielmo C."/>
            <person name="Masucci M.G."/>
        </authorList>
    </citation>
    <scope>FUNCTION</scope>
    <scope>MUTAGENESIS OF CYS-61</scope>
</reference>
<reference key="6">
    <citation type="journal article" date="2012" name="J. Mol. Cell Biol.">
        <title>Herpes virus deneddylases interrupt the cullin-RING ligase neddylation cycle by inhibiting the binding of CAND1.</title>
        <authorList>
            <person name="Gastaldello S."/>
            <person name="Callegari S."/>
            <person name="Coppotelli G."/>
            <person name="Hildebrand S."/>
            <person name="Song M."/>
            <person name="Masucci M.G."/>
        </authorList>
    </citation>
    <scope>FUNCTION</scope>
    <scope>INTERACTION WITH HOST CUL1 AND CUL4A</scope>
</reference>
<reference key="7">
    <citation type="journal article" date="2014" name="PLoS Pathog.">
        <title>Epstein-Barr virus large tegument protein BPLF1 contributes to innate immune evasion through interference with toll-like receptor signaling.</title>
        <authorList>
            <person name="van Gent M."/>
            <person name="Braem S.G."/>
            <person name="de Jong A."/>
            <person name="Delagic N."/>
            <person name="Peeters J.G."/>
            <person name="Boer I.G."/>
            <person name="Moynagh P.N."/>
            <person name="Kremmer E."/>
            <person name="Wiertz E.J."/>
            <person name="Ovaa H."/>
            <person name="Griffin B.D."/>
            <person name="Ressing M.E."/>
        </authorList>
    </citation>
    <scope>FUNCTION</scope>
    <scope>SUBCELLULAR LOCATION</scope>
    <scope>MUTAGENESIS OF CYS-61</scope>
    <scope>CATALYTIC ACTIVITY</scope>
</reference>
<reference key="8">
    <citation type="journal article" date="2018" name="PLoS Pathog.">
        <title>Herpesvirus deconjugases inhibit the IFN response by promoting TRIM25 autoubiquitination and functional inactivation of the RIG-I signalosome.</title>
        <authorList>
            <person name="Gupta S."/>
            <person name="Ylae-Anttila P."/>
            <person name="Callegari S."/>
            <person name="Tsai M.H."/>
            <person name="Delecluse H.J."/>
            <person name="Masucci M.G."/>
        </authorList>
    </citation>
    <scope>FUNCTION</scope>
    <scope>SUBCELLULAR LOCATION</scope>
    <scope>MUTAGENESIS OF CYS-61</scope>
    <scope>INTERACTION WITH HOST TRIM25 AND YWHAZ</scope>
</reference>
<reference key="9">
    <citation type="journal article" date="2019" name="PLoS Pathog.">
        <title>14-3-3 scaffold proteins mediate the inactivation of trim25 and inhibition of the type I interferon response by herpesvirus deconjugases.</title>
        <authorList>
            <person name="Gupta S."/>
            <person name="Ylae-Anttila P."/>
            <person name="Sandalova T."/>
            <person name="Sun R."/>
            <person name="Achour A."/>
            <person name="Masucci M.G."/>
        </authorList>
    </citation>
    <scope>FUNCTION</scope>
    <scope>SUBCELLULAR LOCATION</scope>
    <scope>MUTAGENESIS OF CYS-61</scope>
    <scope>INTERACTION WITH HOST TRIM25 AND YWHAZ</scope>
</reference>
<reference key="10">
    <citation type="journal article" date="2021" name="Autophagy">
        <title>The Epstein-Barr virus deubiquitinase BPLF1 targets SQSTM1/p62 to inhibit selective autophagy.</title>
        <authorList>
            <person name="Ylae-Anttila P."/>
            <person name="Gupta S."/>
            <person name="Masucci M.G."/>
        </authorList>
    </citation>
    <scope>FUNCTION</scope>
    <scope>CATALYTIC ACTIVITY</scope>
</reference>
<reference key="11">
    <citation type="journal article" date="2021" name="PLoS Pathog.">
        <title>The Epstein-Barr virus deubiquitinating enzyme BPLF1 regulates the activity of topoisomerase II during productive infection.</title>
        <authorList>
            <person name="Li J."/>
            <person name="Nagy N."/>
            <person name="Liu J."/>
            <person name="Gupta S."/>
            <person name="Frisan T."/>
            <person name="Hennig T."/>
            <person name="Cameron D.P."/>
            <person name="Baranello L."/>
            <person name="Masucci M.G."/>
        </authorList>
    </citation>
    <scope>FUNCTION</scope>
    <scope>SUBCELLULAR LOCATION</scope>
    <scope>CATALYTIC ACTIVITY</scope>
    <scope>MUTAGENESIS OF CYS-61</scope>
</reference>
<reference key="12">
    <citation type="journal article" date="2023" name="PLoS Pathog.">
        <title>Suppression of cGAS- and RIG-I-mediated innate immune signaling by Epstein-Barr virus deubiquitinase BPLF1.</title>
        <authorList>
            <person name="Lui W.Y."/>
            <person name="Bharti A."/>
            <person name="Wong N.M."/>
            <person name="Jangra S."/>
            <person name="Botelho M.G."/>
            <person name="Yuen K.S."/>
            <person name="Jin D.Y."/>
        </authorList>
    </citation>
    <scope>FUNCTION</scope>
    <scope>CATALYTIC ACTIVITY</scope>
</reference>
<gene>
    <name type="ORF">BPLF1</name>
</gene>
<protein>
    <recommendedName>
        <fullName evidence="1">Large tegument protein deneddylase</fullName>
        <ecNumber evidence="1 5 7 10 11">3.4.19.12</ecNumber>
        <ecNumber evidence="1 5">3.4.22.-</ecNumber>
    </recommendedName>
</protein>
<feature type="chain" id="PRO_0000116038" description="Large tegument protein deneddylase">
    <location>
        <begin position="1"/>
        <end position="3149"/>
    </location>
</feature>
<feature type="domain" description="Peptidase C76" evidence="1">
    <location>
        <begin position="41"/>
        <end position="258"/>
    </location>
</feature>
<feature type="repeat" description="1">
    <location>
        <begin position="335"/>
        <end position="339"/>
    </location>
</feature>
<feature type="repeat" description="2">
    <location>
        <begin position="340"/>
        <end position="344"/>
    </location>
</feature>
<feature type="repeat" description="3">
    <location>
        <begin position="345"/>
        <end position="349"/>
    </location>
</feature>
<feature type="repeat" description="4">
    <location>
        <begin position="350"/>
        <end position="354"/>
    </location>
</feature>
<feature type="repeat" description="5">
    <location>
        <begin position="355"/>
        <end position="359"/>
    </location>
</feature>
<feature type="repeat" description="6">
    <location>
        <begin position="360"/>
        <end position="364"/>
    </location>
</feature>
<feature type="repeat" description="7">
    <location>
        <begin position="365"/>
        <end position="369"/>
    </location>
</feature>
<feature type="repeat" description="8">
    <location>
        <begin position="370"/>
        <end position="374"/>
    </location>
</feature>
<feature type="region of interest" description="Deubiquitination activity" evidence="1">
    <location>
        <begin position="1"/>
        <end position="268"/>
    </location>
</feature>
<feature type="region of interest" description="Disordered" evidence="2">
    <location>
        <begin position="1"/>
        <end position="30"/>
    </location>
</feature>
<feature type="region of interest" description="Disordered" evidence="2">
    <location>
        <begin position="319"/>
        <end position="341"/>
    </location>
</feature>
<feature type="region of interest" description="8 X 5 AA repeats of P-A-S-A-A">
    <location>
        <begin position="335"/>
        <end position="374"/>
    </location>
</feature>
<feature type="region of interest" description="Disordered" evidence="2">
    <location>
        <begin position="382"/>
        <end position="656"/>
    </location>
</feature>
<feature type="region of interest" description="Interaction with inner tegument protein" evidence="1">
    <location>
        <begin position="554"/>
        <end position="584"/>
    </location>
</feature>
<feature type="region of interest" description="Disordered" evidence="2">
    <location>
        <begin position="901"/>
        <end position="923"/>
    </location>
</feature>
<feature type="region of interest" description="Disordered" evidence="2">
    <location>
        <begin position="1143"/>
        <end position="1166"/>
    </location>
</feature>
<feature type="region of interest" description="Disordered" evidence="2">
    <location>
        <begin position="1412"/>
        <end position="1434"/>
    </location>
</feature>
<feature type="region of interest" description="Disordered" evidence="2">
    <location>
        <begin position="1644"/>
        <end position="1677"/>
    </location>
</feature>
<feature type="region of interest" description="Disordered" evidence="2">
    <location>
        <begin position="2583"/>
        <end position="2839"/>
    </location>
</feature>
<feature type="region of interest" description="Disordered" evidence="2">
    <location>
        <begin position="2852"/>
        <end position="2981"/>
    </location>
</feature>
<feature type="region of interest" description="Disordered" evidence="2">
    <location>
        <begin position="2995"/>
        <end position="3019"/>
    </location>
</feature>
<feature type="compositionally biased region" description="Polar residues" evidence="2">
    <location>
        <begin position="1"/>
        <end position="13"/>
    </location>
</feature>
<feature type="compositionally biased region" description="Pro residues" evidence="2">
    <location>
        <begin position="462"/>
        <end position="483"/>
    </location>
</feature>
<feature type="compositionally biased region" description="Low complexity" evidence="2">
    <location>
        <begin position="509"/>
        <end position="536"/>
    </location>
</feature>
<feature type="compositionally biased region" description="Low complexity" evidence="2">
    <location>
        <begin position="544"/>
        <end position="564"/>
    </location>
</feature>
<feature type="compositionally biased region" description="Pro residues" evidence="2">
    <location>
        <begin position="565"/>
        <end position="609"/>
    </location>
</feature>
<feature type="compositionally biased region" description="Low complexity" evidence="2">
    <location>
        <begin position="1143"/>
        <end position="1155"/>
    </location>
</feature>
<feature type="compositionally biased region" description="Polar residues" evidence="2">
    <location>
        <begin position="2592"/>
        <end position="2603"/>
    </location>
</feature>
<feature type="compositionally biased region" description="Pro residues" evidence="2">
    <location>
        <begin position="2711"/>
        <end position="2720"/>
    </location>
</feature>
<feature type="compositionally biased region" description="Polar residues" evidence="2">
    <location>
        <begin position="2734"/>
        <end position="2745"/>
    </location>
</feature>
<feature type="compositionally biased region" description="Polar residues" evidence="2">
    <location>
        <begin position="2784"/>
        <end position="2804"/>
    </location>
</feature>
<feature type="compositionally biased region" description="Basic and acidic residues" evidence="2">
    <location>
        <begin position="2812"/>
        <end position="2827"/>
    </location>
</feature>
<feature type="compositionally biased region" description="Low complexity" evidence="2">
    <location>
        <begin position="2874"/>
        <end position="2885"/>
    </location>
</feature>
<feature type="active site" evidence="1 5">
    <location>
        <position position="61"/>
    </location>
</feature>
<feature type="active site" evidence="1">
    <location>
        <position position="193"/>
    </location>
</feature>
<feature type="active site" evidence="1">
    <location>
        <position position="195"/>
    </location>
</feature>
<feature type="site" description="Important for catalytic activity" evidence="1">
    <location>
        <position position="48"/>
    </location>
</feature>
<feature type="mutagenesis site" description="Complete loss of ubiquitin and NEDD8 binding as well as deubiquitinase activity." evidence="5 7 8 10 11">
    <original>C</original>
    <variation>A</variation>
    <location>
        <position position="61"/>
    </location>
</feature>
<sequence>MSNGDWGQSQRTRGTGPVRGIRTMDVNAPGGGSGGSALRILGTASCNQAHCKFGRFAGIQCVSNCVLYLVKSFLAGRPLTSRPELDEVLDEGARLDALMRQSGILKGHEMAQLTDVPSSVVLRGGGRVHIYRSAEIFGLVLFPAQIANSAVVQSLAEVLHGSYNGVAQFILYICDIYAGAIIIETDGSFYLFDPHCQKDAAPGTPAHVRVSTYAHDILQYVGAPGAQYTCVHLYFLPEAFETEDPRIFMLEHYGVYDFYEANGSGFDLVGPELVSSDGEAAGTPGADSSPPVMLPFERRIIPYNLRPLPSRSFTSDSFPAARYSPAKTNSPPSSPASAAPASAAPASAAPASAAPASAAPASAAPASAAPASAAPASSPPLFIPIPGLGHTPGVPAPSTPPRASSGAAPQTPKRKKGLGKDSPHKKPTSGRRLPLSSTTDTEDDQLPRTHVPPHRPPSAARLPPPVIPIPHQSPPASPTPHPAPVSTIAPSVTPSPRLPLQIPIPLPQAAPSNPKIPLTTPSPSPTAAAAPTTTTLSPPPTQQQPPQSAAPAPSPLLPQQQPTPSAAPAPSPLLPQQQPPPSAARAPSPLPPQQQPLPSATPAPPPAQQLPPSATTLEPEKNHPPAADRAGTEISPSPPFGQQPSFGDDASGGSGLVRYLSDLEEPFLSMSDSEEAESDLASDIPTTEDEDMFEDEVFSNSLESGSSAPTSPITLDTARSQYYQTTFDIETPEMDFVPLESNIARIAGHTYQEQAIVYDPASNREVPEADALSMIDYLLVTVVLEQGLIRSRDRSSVLNLLEFLKDWSGHLQVPTLDLEQLLTSELNIQNLANMLSENKGRAGEFHKHLAAKLEACLPSLATKDAVRVDAGAKMLAEIPQLAESDDGKFDLEAARRRLTDLLSGGDQEAGEGGGEPEDNSIYRGPHVDVPLVLDDESWKRLLSLAEAARTAVARQQAGVDEEDVRFLALLTAIEYGAPPAASVPPFVHNVAVRSKNAALHVRRCTADIRDKVASAASDYLSYLEDPSLPTVMDFDDLLTHLRHTCQIIASLPLLNIRYTSIEWDYRELLYLGTALSDMSGIPWPLERVEEDDPSIAPLPEFETVAKKQKELETTRENEKRLRTILDDIEAMLGLAGVASAPGAPISPASPSATPANHDNPEATPPLADTAALTIPVIEKYIANAGSIVGAAKNPTYIRLRDTIQQIVRSKKYLMNILKSITFYTIDNYIASFEESIDHLYRDLPVLDPEVQDGIDRILDPMVSEALHTFEMGNRLTLEPARLVALQNFATHSTLKETAAAVNLLPGLLAVYDATITGQAPEDALRLLSGLQNQLSQTLIPGKLKKRFLSYLQKLKNNNNDQLRQKEVQAWRLEAEGFKPATEEQLEAFLDTAPNKELKRQYEKKLRQLMETGRKEKEKLREQEDKERQERRAREANEAWARIRKALGARPEPAPTSPDDWNTLLASLLPDNTDSAAAAAAAVARNTDILDSLTQILAAMLLGITRVRRERLRSLLVDDGGAAERMEAAEPGWFTDIETGPLARLDAWPATPAATAKEGGGGRGAEEAAGALFRARTAADAIRSALAQTRQALQSPDMKSAVVNTDLEAPYAEYERGLAGLLEKRRAAEAALTAIVSEYVDRTLPEATNDPGQANLPPPPTIPQATAPPRLASDSALWPKKPQLLTRRERDDLLQATGDFFSELLTEAEAAEVRALEEQVRESQTLMAKAHEMAASTRRGFHTALEAVLSRSRDEAPDDELRSLLPSPPKAPVQAPLEAALARAAAGNGSWPYRKSLAAAKWIRGICEAVRGLSEGALALAGGAGAWLNLAAAADGEIHELTRLLEVEGMAQNSMDGMEELRLALATLDPKRVAGGKETVADWKRRLSRLEAIIQEAQEESQLQGTLQDLVTQARGHTDPRQLKIVVEAARGLALGASAGSQYALLKDKLLRYASAKQSFLAFYETAQPTVFVKHPLTNNLPLLITISAPPTGWGNGAPTRRAQFLAAAGPAKYAGTLWLETESPCDPLNPAYVSADTQEPLNYIPVYHNFLEYVMPTVLENPEAFSLTPAGRPQAIGPPQDDQERRRRTLASVASARLSAAAADSYWDTWPDVESNAGELLREYVSAPKALMEDLADNPIVAMTLLAHASLIASRNHPPYPAPATDREVILLEQREMMALLVGTHPAYAAAFLGAPSFYAGLGLVSALARDGGLGDLLSDSVLTYRLVRSPASGRGGMPSTTRGSNDGEDARRLTRHRIAGPPTGFIFFQDAWEEMDTRAALWPHPEFLGLVHNQSTARARACMLLLARRCFAPEALQQLWHSLRPLEGPVAFQDYLRDFVKQAYTRGEELPRAEGLEVPRETPSSYGTVTGRALRNLMPYGTPITGPKRGSGDTIPVSVFEAAVAAAFLGRPLTLFVSSQYLFNLKTLGQVRVVAPLLYCDGHSEPFRSLVETISLNFLQDLDGYSESFEPEMSIFARQAVWLRELLTEARAAKPKEARPPTVAILANRKNIIWKCFTYRHNLPDVQFYFNAAGASRWPTDVLNPSFYEHEDPPLPVGYQLPPNPRNVQELFSGFPPRVGHGLVSGDGFQSADNTPASSDRLQQLGGGETDQGEKGSTTAESEASGPPSPQSPLLEKVAPGRPRDWLSPTSSPRDVTVTPGLAAPITLPGPRLMARPYFGAETRASESPDRSPGSSPRPWPKDSLELLPQPAPQQPPSSPWASEQGPIVYTLSPHSTPSTASGSQKKHTIQIPGLVPSQKPSYPPSAPYKPGQSTGGIAPTPSAASLTTFGLQPQDTQASSQDPPYGHSIMQREKKQQGGREEAAEIRPSATRLPTAVGLRPRAPVVAAGAAASATPAFDPGEAPSGFPIPQAPALGSGLAAPAHTPVGALAPRPQKTQAQRPQDAAALPTPTIKAVGARPVPKATGALAAGARPRGQPTAAPPSAASPPRVSLPVRSRQQQSPAIPLPPMHSGSEPGARPEVRLSQYRHAGPQTYTVRKEAPPSAASQLPKMPKCKDSMYYPPSGSARYPAPFQALSFSQSVASPAPSSDQTTLLWNTPSVVTQFLSIEDIIREVVTGGSTSGDLVVPSGSPSSLSTAAPEQDLRYSLTLSQASRVLSRFVSQLRRKLERSTHRLIADLERLKFLYL</sequence>
<proteinExistence type="evidence at protein level"/>